<keyword id="KW-0067">ATP-binding</keyword>
<keyword id="KW-0963">Cytoplasm</keyword>
<keyword id="KW-0436">Ligase</keyword>
<keyword id="KW-0547">Nucleotide-binding</keyword>
<keyword id="KW-0658">Purine biosynthesis</keyword>
<gene>
    <name evidence="1" type="primary">purM</name>
    <name type="ordered locus">SaurJH9_1131</name>
</gene>
<dbReference type="EC" id="6.3.3.1" evidence="1"/>
<dbReference type="EMBL" id="CP000703">
    <property type="protein sequence ID" value="ABQ48931.1"/>
    <property type="molecule type" value="Genomic_DNA"/>
</dbReference>
<dbReference type="RefSeq" id="WP_000030811.1">
    <property type="nucleotide sequence ID" value="NC_009487.1"/>
</dbReference>
<dbReference type="SMR" id="A5IRV8"/>
<dbReference type="KEGG" id="saj:SaurJH9_1131"/>
<dbReference type="HOGENOM" id="CLU_047116_0_0_9"/>
<dbReference type="UniPathway" id="UPA00074">
    <property type="reaction ID" value="UER00129"/>
</dbReference>
<dbReference type="GO" id="GO:0005829">
    <property type="term" value="C:cytosol"/>
    <property type="evidence" value="ECO:0007669"/>
    <property type="project" value="TreeGrafter"/>
</dbReference>
<dbReference type="GO" id="GO:0005524">
    <property type="term" value="F:ATP binding"/>
    <property type="evidence" value="ECO:0007669"/>
    <property type="project" value="UniProtKB-KW"/>
</dbReference>
<dbReference type="GO" id="GO:0004637">
    <property type="term" value="F:phosphoribosylamine-glycine ligase activity"/>
    <property type="evidence" value="ECO:0007669"/>
    <property type="project" value="TreeGrafter"/>
</dbReference>
<dbReference type="GO" id="GO:0004641">
    <property type="term" value="F:phosphoribosylformylglycinamidine cyclo-ligase activity"/>
    <property type="evidence" value="ECO:0007669"/>
    <property type="project" value="UniProtKB-UniRule"/>
</dbReference>
<dbReference type="GO" id="GO:0006189">
    <property type="term" value="P:'de novo' IMP biosynthetic process"/>
    <property type="evidence" value="ECO:0007669"/>
    <property type="project" value="UniProtKB-UniRule"/>
</dbReference>
<dbReference type="GO" id="GO:0046084">
    <property type="term" value="P:adenine biosynthetic process"/>
    <property type="evidence" value="ECO:0007669"/>
    <property type="project" value="TreeGrafter"/>
</dbReference>
<dbReference type="CDD" id="cd02196">
    <property type="entry name" value="PurM"/>
    <property type="match status" value="1"/>
</dbReference>
<dbReference type="FunFam" id="3.30.1330.10:FF:000001">
    <property type="entry name" value="Phosphoribosylformylglycinamidine cyclo-ligase"/>
    <property type="match status" value="1"/>
</dbReference>
<dbReference type="FunFam" id="3.90.650.10:FF:000001">
    <property type="entry name" value="Phosphoribosylformylglycinamidine cyclo-ligase"/>
    <property type="match status" value="1"/>
</dbReference>
<dbReference type="Gene3D" id="3.90.650.10">
    <property type="entry name" value="PurM-like C-terminal domain"/>
    <property type="match status" value="1"/>
</dbReference>
<dbReference type="Gene3D" id="3.30.1330.10">
    <property type="entry name" value="PurM-like, N-terminal domain"/>
    <property type="match status" value="1"/>
</dbReference>
<dbReference type="HAMAP" id="MF_00741">
    <property type="entry name" value="AIRS"/>
    <property type="match status" value="1"/>
</dbReference>
<dbReference type="InterPro" id="IPR010918">
    <property type="entry name" value="PurM-like_C_dom"/>
</dbReference>
<dbReference type="InterPro" id="IPR036676">
    <property type="entry name" value="PurM-like_C_sf"/>
</dbReference>
<dbReference type="InterPro" id="IPR016188">
    <property type="entry name" value="PurM-like_N"/>
</dbReference>
<dbReference type="InterPro" id="IPR036921">
    <property type="entry name" value="PurM-like_N_sf"/>
</dbReference>
<dbReference type="InterPro" id="IPR004733">
    <property type="entry name" value="PurM_cligase"/>
</dbReference>
<dbReference type="NCBIfam" id="TIGR00878">
    <property type="entry name" value="purM"/>
    <property type="match status" value="1"/>
</dbReference>
<dbReference type="PANTHER" id="PTHR10520:SF12">
    <property type="entry name" value="TRIFUNCTIONAL PURINE BIOSYNTHETIC PROTEIN ADENOSINE-3"/>
    <property type="match status" value="1"/>
</dbReference>
<dbReference type="PANTHER" id="PTHR10520">
    <property type="entry name" value="TRIFUNCTIONAL PURINE BIOSYNTHETIC PROTEIN ADENOSINE-3-RELATED"/>
    <property type="match status" value="1"/>
</dbReference>
<dbReference type="Pfam" id="PF00586">
    <property type="entry name" value="AIRS"/>
    <property type="match status" value="1"/>
</dbReference>
<dbReference type="Pfam" id="PF02769">
    <property type="entry name" value="AIRS_C"/>
    <property type="match status" value="1"/>
</dbReference>
<dbReference type="SUPFAM" id="SSF56042">
    <property type="entry name" value="PurM C-terminal domain-like"/>
    <property type="match status" value="1"/>
</dbReference>
<dbReference type="SUPFAM" id="SSF55326">
    <property type="entry name" value="PurM N-terminal domain-like"/>
    <property type="match status" value="1"/>
</dbReference>
<organism>
    <name type="scientific">Staphylococcus aureus (strain JH9)</name>
    <dbReference type="NCBI Taxonomy" id="359786"/>
    <lineage>
        <taxon>Bacteria</taxon>
        <taxon>Bacillati</taxon>
        <taxon>Bacillota</taxon>
        <taxon>Bacilli</taxon>
        <taxon>Bacillales</taxon>
        <taxon>Staphylococcaceae</taxon>
        <taxon>Staphylococcus</taxon>
    </lineage>
</organism>
<accession>A5IRV8</accession>
<feature type="chain" id="PRO_1000083468" description="Phosphoribosylformylglycinamidine cyclo-ligase">
    <location>
        <begin position="1"/>
        <end position="342"/>
    </location>
</feature>
<comment type="catalytic activity">
    <reaction evidence="1">
        <text>2-formamido-N(1)-(5-O-phospho-beta-D-ribosyl)acetamidine + ATP = 5-amino-1-(5-phospho-beta-D-ribosyl)imidazole + ADP + phosphate + H(+)</text>
        <dbReference type="Rhea" id="RHEA:23032"/>
        <dbReference type="ChEBI" id="CHEBI:15378"/>
        <dbReference type="ChEBI" id="CHEBI:30616"/>
        <dbReference type="ChEBI" id="CHEBI:43474"/>
        <dbReference type="ChEBI" id="CHEBI:137981"/>
        <dbReference type="ChEBI" id="CHEBI:147287"/>
        <dbReference type="ChEBI" id="CHEBI:456216"/>
        <dbReference type="EC" id="6.3.3.1"/>
    </reaction>
</comment>
<comment type="pathway">
    <text evidence="1">Purine metabolism; IMP biosynthesis via de novo pathway; 5-amino-1-(5-phospho-D-ribosyl)imidazole from N(2)-formyl-N(1)-(5-phospho-D-ribosyl)glycinamide: step 2/2.</text>
</comment>
<comment type="subcellular location">
    <subcellularLocation>
        <location evidence="1">Cytoplasm</location>
    </subcellularLocation>
</comment>
<comment type="similarity">
    <text evidence="1">Belongs to the AIR synthase family.</text>
</comment>
<reference key="1">
    <citation type="submission" date="2007-05" db="EMBL/GenBank/DDBJ databases">
        <title>Complete sequence of chromosome of Staphylococcus aureus subsp. aureus JH9.</title>
        <authorList>
            <consortium name="US DOE Joint Genome Institute"/>
            <person name="Copeland A."/>
            <person name="Lucas S."/>
            <person name="Lapidus A."/>
            <person name="Barry K."/>
            <person name="Detter J.C."/>
            <person name="Glavina del Rio T."/>
            <person name="Hammon N."/>
            <person name="Israni S."/>
            <person name="Pitluck S."/>
            <person name="Chain P."/>
            <person name="Malfatti S."/>
            <person name="Shin M."/>
            <person name="Vergez L."/>
            <person name="Schmutz J."/>
            <person name="Larimer F."/>
            <person name="Land M."/>
            <person name="Hauser L."/>
            <person name="Kyrpides N."/>
            <person name="Kim E."/>
            <person name="Tomasz A."/>
            <person name="Richardson P."/>
        </authorList>
    </citation>
    <scope>NUCLEOTIDE SEQUENCE [LARGE SCALE GENOMIC DNA]</scope>
    <source>
        <strain>JH9</strain>
    </source>
</reference>
<sequence>MSKAYEQSGVNIHAGYEAVERMSSHVKRTMRKEVIGGLGGFGATFDLSQLNMTAPVLVSGTDGVGTKLKLAIDYGKHDSIGIDAVAMCVNDILTTGAEPLYFLDYIATNKVVPEVIEQIVKGISDACVETNTALIGGETAEMGEMYHEGEYDVAGFAVGAVEKDDYVDGSEVKEGQVVIGLASSGIHSNGYSLVRKLINESGIDLASNFDNRPFIDVFLEPTKLYVKPVLALKKEVSIKAMNHITGGGFYENIPRALPAGYAARIDTTSFPTPKIFDWLQQQGNIDTNEMYNIFNMGIGYTVIVDEKDASRALKILAEQNVEAYQIGHIVKNESTAIELLGV</sequence>
<name>PUR5_STAA9</name>
<protein>
    <recommendedName>
        <fullName evidence="1">Phosphoribosylformylglycinamidine cyclo-ligase</fullName>
        <ecNumber evidence="1">6.3.3.1</ecNumber>
    </recommendedName>
    <alternativeName>
        <fullName evidence="1">AIR synthase</fullName>
    </alternativeName>
    <alternativeName>
        <fullName evidence="1">AIRS</fullName>
    </alternativeName>
    <alternativeName>
        <fullName evidence="1">Phosphoribosyl-aminoimidazole synthetase</fullName>
    </alternativeName>
</protein>
<evidence type="ECO:0000255" key="1">
    <source>
        <dbReference type="HAMAP-Rule" id="MF_00741"/>
    </source>
</evidence>
<proteinExistence type="inferred from homology"/>